<organism>
    <name type="scientific">Burkholderia vietnamiensis (strain G4 / LMG 22486)</name>
    <name type="common">Burkholderia cepacia (strain R1808)</name>
    <dbReference type="NCBI Taxonomy" id="269482"/>
    <lineage>
        <taxon>Bacteria</taxon>
        <taxon>Pseudomonadati</taxon>
        <taxon>Pseudomonadota</taxon>
        <taxon>Betaproteobacteria</taxon>
        <taxon>Burkholderiales</taxon>
        <taxon>Burkholderiaceae</taxon>
        <taxon>Burkholderia</taxon>
        <taxon>Burkholderia cepacia complex</taxon>
    </lineage>
</organism>
<accession>A4JAP2</accession>
<reference key="1">
    <citation type="submission" date="2007-03" db="EMBL/GenBank/DDBJ databases">
        <title>Complete sequence of chromosome 1 of Burkholderia vietnamiensis G4.</title>
        <authorList>
            <consortium name="US DOE Joint Genome Institute"/>
            <person name="Copeland A."/>
            <person name="Lucas S."/>
            <person name="Lapidus A."/>
            <person name="Barry K."/>
            <person name="Detter J.C."/>
            <person name="Glavina del Rio T."/>
            <person name="Hammon N."/>
            <person name="Israni S."/>
            <person name="Dalin E."/>
            <person name="Tice H."/>
            <person name="Pitluck S."/>
            <person name="Chain P."/>
            <person name="Malfatti S."/>
            <person name="Shin M."/>
            <person name="Vergez L."/>
            <person name="Schmutz J."/>
            <person name="Larimer F."/>
            <person name="Land M."/>
            <person name="Hauser L."/>
            <person name="Kyrpides N."/>
            <person name="Tiedje J."/>
            <person name="Richardson P."/>
        </authorList>
    </citation>
    <scope>NUCLEOTIDE SEQUENCE [LARGE SCALE GENOMIC DNA]</scope>
    <source>
        <strain>G4 / LMG 22486</strain>
    </source>
</reference>
<sequence>MSEIRKNDHRLMQVLLAPVISEKATLVADKNEQVVFEVAPDATKQEVKAAVELLFKVEVDSVNVLVQKGKQKRFGRSMGRRKDVKKAYVCLKPGQEINFEAEAK</sequence>
<dbReference type="EMBL" id="CP000614">
    <property type="protein sequence ID" value="ABO53345.1"/>
    <property type="molecule type" value="Genomic_DNA"/>
</dbReference>
<dbReference type="SMR" id="A4JAP2"/>
<dbReference type="KEGG" id="bvi:Bcep1808_0332"/>
<dbReference type="eggNOG" id="COG0089">
    <property type="taxonomic scope" value="Bacteria"/>
</dbReference>
<dbReference type="HOGENOM" id="CLU_037562_3_1_4"/>
<dbReference type="Proteomes" id="UP000002287">
    <property type="component" value="Chromosome 1"/>
</dbReference>
<dbReference type="GO" id="GO:1990904">
    <property type="term" value="C:ribonucleoprotein complex"/>
    <property type="evidence" value="ECO:0007669"/>
    <property type="project" value="UniProtKB-KW"/>
</dbReference>
<dbReference type="GO" id="GO:0005840">
    <property type="term" value="C:ribosome"/>
    <property type="evidence" value="ECO:0007669"/>
    <property type="project" value="UniProtKB-KW"/>
</dbReference>
<dbReference type="GO" id="GO:0019843">
    <property type="term" value="F:rRNA binding"/>
    <property type="evidence" value="ECO:0007669"/>
    <property type="project" value="UniProtKB-UniRule"/>
</dbReference>
<dbReference type="GO" id="GO:0003735">
    <property type="term" value="F:structural constituent of ribosome"/>
    <property type="evidence" value="ECO:0007669"/>
    <property type="project" value="InterPro"/>
</dbReference>
<dbReference type="GO" id="GO:0006412">
    <property type="term" value="P:translation"/>
    <property type="evidence" value="ECO:0007669"/>
    <property type="project" value="UniProtKB-UniRule"/>
</dbReference>
<dbReference type="FunFam" id="3.30.70.330:FF:000001">
    <property type="entry name" value="50S ribosomal protein L23"/>
    <property type="match status" value="1"/>
</dbReference>
<dbReference type="Gene3D" id="3.30.70.330">
    <property type="match status" value="1"/>
</dbReference>
<dbReference type="HAMAP" id="MF_01369_B">
    <property type="entry name" value="Ribosomal_uL23_B"/>
    <property type="match status" value="1"/>
</dbReference>
<dbReference type="InterPro" id="IPR012677">
    <property type="entry name" value="Nucleotide-bd_a/b_plait_sf"/>
</dbReference>
<dbReference type="InterPro" id="IPR013025">
    <property type="entry name" value="Ribosomal_uL23-like"/>
</dbReference>
<dbReference type="InterPro" id="IPR012678">
    <property type="entry name" value="Ribosomal_uL23/eL15/eS24_sf"/>
</dbReference>
<dbReference type="NCBIfam" id="NF004359">
    <property type="entry name" value="PRK05738.1-3"/>
    <property type="match status" value="1"/>
</dbReference>
<dbReference type="NCBIfam" id="NF004363">
    <property type="entry name" value="PRK05738.2-4"/>
    <property type="match status" value="1"/>
</dbReference>
<dbReference type="PANTHER" id="PTHR11620">
    <property type="entry name" value="60S RIBOSOMAL PROTEIN L23A"/>
    <property type="match status" value="1"/>
</dbReference>
<dbReference type="Pfam" id="PF00276">
    <property type="entry name" value="Ribosomal_L23"/>
    <property type="match status" value="1"/>
</dbReference>
<dbReference type="SUPFAM" id="SSF54189">
    <property type="entry name" value="Ribosomal proteins S24e, L23 and L15e"/>
    <property type="match status" value="1"/>
</dbReference>
<protein>
    <recommendedName>
        <fullName evidence="1">Large ribosomal subunit protein uL23</fullName>
    </recommendedName>
    <alternativeName>
        <fullName evidence="2">50S ribosomal protein L23</fullName>
    </alternativeName>
</protein>
<proteinExistence type="inferred from homology"/>
<keyword id="KW-0687">Ribonucleoprotein</keyword>
<keyword id="KW-0689">Ribosomal protein</keyword>
<keyword id="KW-0694">RNA-binding</keyword>
<keyword id="KW-0699">rRNA-binding</keyword>
<name>RL23_BURVG</name>
<evidence type="ECO:0000255" key="1">
    <source>
        <dbReference type="HAMAP-Rule" id="MF_01369"/>
    </source>
</evidence>
<evidence type="ECO:0000305" key="2"/>
<gene>
    <name evidence="1" type="primary">rplW</name>
    <name type="ordered locus">Bcep1808_0332</name>
</gene>
<feature type="chain" id="PRO_1000068051" description="Large ribosomal subunit protein uL23">
    <location>
        <begin position="1"/>
        <end position="104"/>
    </location>
</feature>
<comment type="function">
    <text evidence="1">One of the early assembly proteins it binds 23S rRNA. One of the proteins that surrounds the polypeptide exit tunnel on the outside of the ribosome. Forms the main docking site for trigger factor binding to the ribosome.</text>
</comment>
<comment type="subunit">
    <text evidence="1">Part of the 50S ribosomal subunit. Contacts protein L29, and trigger factor when it is bound to the ribosome.</text>
</comment>
<comment type="similarity">
    <text evidence="1">Belongs to the universal ribosomal protein uL23 family.</text>
</comment>